<proteinExistence type="inferred from homology"/>
<dbReference type="EC" id="1.2.1.70" evidence="1"/>
<dbReference type="EMBL" id="CP000705">
    <property type="protein sequence ID" value="ABQ83942.1"/>
    <property type="molecule type" value="Genomic_DNA"/>
</dbReference>
<dbReference type="RefSeq" id="WP_011953572.1">
    <property type="nucleotide sequence ID" value="NC_009513.1"/>
</dbReference>
<dbReference type="SMR" id="A5VM68"/>
<dbReference type="STRING" id="557436.Lreu_1703"/>
<dbReference type="KEGG" id="lre:Lreu_1703"/>
<dbReference type="PATRIC" id="fig|557436.17.peg.625"/>
<dbReference type="eggNOG" id="COG0373">
    <property type="taxonomic scope" value="Bacteria"/>
</dbReference>
<dbReference type="HOGENOM" id="CLU_035113_2_2_9"/>
<dbReference type="UniPathway" id="UPA00251">
    <property type="reaction ID" value="UER00316"/>
</dbReference>
<dbReference type="Proteomes" id="UP000001991">
    <property type="component" value="Chromosome"/>
</dbReference>
<dbReference type="GO" id="GO:0008883">
    <property type="term" value="F:glutamyl-tRNA reductase activity"/>
    <property type="evidence" value="ECO:0007669"/>
    <property type="project" value="UniProtKB-UniRule"/>
</dbReference>
<dbReference type="GO" id="GO:0050661">
    <property type="term" value="F:NADP binding"/>
    <property type="evidence" value="ECO:0007669"/>
    <property type="project" value="InterPro"/>
</dbReference>
<dbReference type="GO" id="GO:0006782">
    <property type="term" value="P:protoporphyrinogen IX biosynthetic process"/>
    <property type="evidence" value="ECO:0007669"/>
    <property type="project" value="UniProtKB-UniRule"/>
</dbReference>
<dbReference type="FunFam" id="3.30.460.30:FF:000001">
    <property type="entry name" value="Glutamyl-tRNA reductase"/>
    <property type="match status" value="1"/>
</dbReference>
<dbReference type="Gene3D" id="3.30.460.30">
    <property type="entry name" value="Glutamyl-tRNA reductase, N-terminal domain"/>
    <property type="match status" value="1"/>
</dbReference>
<dbReference type="Gene3D" id="3.40.50.720">
    <property type="entry name" value="NAD(P)-binding Rossmann-like Domain"/>
    <property type="match status" value="1"/>
</dbReference>
<dbReference type="HAMAP" id="MF_00087">
    <property type="entry name" value="Glu_tRNA_reductase"/>
    <property type="match status" value="1"/>
</dbReference>
<dbReference type="InterPro" id="IPR000343">
    <property type="entry name" value="4pyrrol_synth_GluRdtase"/>
</dbReference>
<dbReference type="InterPro" id="IPR015896">
    <property type="entry name" value="4pyrrol_synth_GluRdtase_dimer"/>
</dbReference>
<dbReference type="InterPro" id="IPR015895">
    <property type="entry name" value="4pyrrol_synth_GluRdtase_N"/>
</dbReference>
<dbReference type="InterPro" id="IPR018214">
    <property type="entry name" value="GluRdtase_CS"/>
</dbReference>
<dbReference type="InterPro" id="IPR036453">
    <property type="entry name" value="GluRdtase_dimer_dom_sf"/>
</dbReference>
<dbReference type="InterPro" id="IPR036343">
    <property type="entry name" value="GluRdtase_N_sf"/>
</dbReference>
<dbReference type="InterPro" id="IPR036291">
    <property type="entry name" value="NAD(P)-bd_dom_sf"/>
</dbReference>
<dbReference type="InterPro" id="IPR006151">
    <property type="entry name" value="Shikm_DH/Glu-tRNA_Rdtase"/>
</dbReference>
<dbReference type="NCBIfam" id="TIGR01035">
    <property type="entry name" value="hemA"/>
    <property type="match status" value="1"/>
</dbReference>
<dbReference type="PANTHER" id="PTHR43120">
    <property type="entry name" value="GLUTAMYL-TRNA REDUCTASE 1, CHLOROPLASTIC"/>
    <property type="match status" value="1"/>
</dbReference>
<dbReference type="PANTHER" id="PTHR43120:SF1">
    <property type="entry name" value="GLUTAMYL-TRNA REDUCTASE 1, CHLOROPLASTIC"/>
    <property type="match status" value="1"/>
</dbReference>
<dbReference type="Pfam" id="PF00745">
    <property type="entry name" value="GlutR_dimer"/>
    <property type="match status" value="1"/>
</dbReference>
<dbReference type="Pfam" id="PF05201">
    <property type="entry name" value="GlutR_N"/>
    <property type="match status" value="1"/>
</dbReference>
<dbReference type="Pfam" id="PF01488">
    <property type="entry name" value="Shikimate_DH"/>
    <property type="match status" value="1"/>
</dbReference>
<dbReference type="PIRSF" id="PIRSF000445">
    <property type="entry name" value="4pyrrol_synth_GluRdtase"/>
    <property type="match status" value="1"/>
</dbReference>
<dbReference type="SUPFAM" id="SSF69742">
    <property type="entry name" value="Glutamyl tRNA-reductase catalytic, N-terminal domain"/>
    <property type="match status" value="1"/>
</dbReference>
<dbReference type="SUPFAM" id="SSF69075">
    <property type="entry name" value="Glutamyl tRNA-reductase dimerization domain"/>
    <property type="match status" value="1"/>
</dbReference>
<dbReference type="SUPFAM" id="SSF51735">
    <property type="entry name" value="NAD(P)-binding Rossmann-fold domains"/>
    <property type="match status" value="1"/>
</dbReference>
<dbReference type="PROSITE" id="PS00747">
    <property type="entry name" value="GLUTR"/>
    <property type="match status" value="1"/>
</dbReference>
<evidence type="ECO:0000255" key="1">
    <source>
        <dbReference type="HAMAP-Rule" id="MF_00087"/>
    </source>
</evidence>
<keyword id="KW-0521">NADP</keyword>
<keyword id="KW-0560">Oxidoreductase</keyword>
<keyword id="KW-0627">Porphyrin biosynthesis</keyword>
<keyword id="KW-1185">Reference proteome</keyword>
<feature type="chain" id="PRO_1000057576" description="Glutamyl-tRNA reductase">
    <location>
        <begin position="1"/>
        <end position="421"/>
    </location>
</feature>
<feature type="active site" description="Nucleophile" evidence="1">
    <location>
        <position position="50"/>
    </location>
</feature>
<feature type="binding site" evidence="1">
    <location>
        <begin position="49"/>
        <end position="52"/>
    </location>
    <ligand>
        <name>substrate</name>
    </ligand>
</feature>
<feature type="binding site" evidence="1">
    <location>
        <position position="109"/>
    </location>
    <ligand>
        <name>substrate</name>
    </ligand>
</feature>
<feature type="binding site" evidence="1">
    <location>
        <begin position="114"/>
        <end position="116"/>
    </location>
    <ligand>
        <name>substrate</name>
    </ligand>
</feature>
<feature type="binding site" evidence="1">
    <location>
        <position position="120"/>
    </location>
    <ligand>
        <name>substrate</name>
    </ligand>
</feature>
<feature type="binding site" evidence="1">
    <location>
        <begin position="189"/>
        <end position="194"/>
    </location>
    <ligand>
        <name>NADP(+)</name>
        <dbReference type="ChEBI" id="CHEBI:58349"/>
    </ligand>
</feature>
<feature type="site" description="Important for activity" evidence="1">
    <location>
        <position position="99"/>
    </location>
</feature>
<comment type="function">
    <text evidence="1">Catalyzes the NADPH-dependent reduction of glutamyl-tRNA(Glu) to glutamate 1-semialdehyde (GSA).</text>
</comment>
<comment type="catalytic activity">
    <reaction evidence="1">
        <text>(S)-4-amino-5-oxopentanoate + tRNA(Glu) + NADP(+) = L-glutamyl-tRNA(Glu) + NADPH + H(+)</text>
        <dbReference type="Rhea" id="RHEA:12344"/>
        <dbReference type="Rhea" id="RHEA-COMP:9663"/>
        <dbReference type="Rhea" id="RHEA-COMP:9680"/>
        <dbReference type="ChEBI" id="CHEBI:15378"/>
        <dbReference type="ChEBI" id="CHEBI:57501"/>
        <dbReference type="ChEBI" id="CHEBI:57783"/>
        <dbReference type="ChEBI" id="CHEBI:58349"/>
        <dbReference type="ChEBI" id="CHEBI:78442"/>
        <dbReference type="ChEBI" id="CHEBI:78520"/>
        <dbReference type="EC" id="1.2.1.70"/>
    </reaction>
</comment>
<comment type="pathway">
    <text evidence="1">Porphyrin-containing compound metabolism; protoporphyrin-IX biosynthesis; 5-aminolevulinate from L-glutamyl-tRNA(Glu): step 1/2.</text>
</comment>
<comment type="subunit">
    <text evidence="1">Homodimer.</text>
</comment>
<comment type="domain">
    <text evidence="1">Possesses an unusual extended V-shaped dimeric structure with each monomer consisting of three distinct domains arranged along a curved 'spinal' alpha-helix. The N-terminal catalytic domain specifically recognizes the glutamate moiety of the substrate. The second domain is the NADPH-binding domain, and the third C-terminal domain is responsible for dimerization.</text>
</comment>
<comment type="miscellaneous">
    <text evidence="1">During catalysis, the active site Cys acts as a nucleophile attacking the alpha-carbonyl group of tRNA-bound glutamate with the formation of a thioester intermediate between enzyme and glutamate, and the concomitant release of tRNA(Glu). The thioester intermediate is finally reduced by direct hydride transfer from NADPH, to form the product GSA.</text>
</comment>
<comment type="similarity">
    <text evidence="1">Belongs to the glutamyl-tRNA reductase family.</text>
</comment>
<reference key="1">
    <citation type="journal article" date="2011" name="PLoS Genet.">
        <title>The evolution of host specialization in the vertebrate gut symbiont Lactobacillus reuteri.</title>
        <authorList>
            <person name="Frese S.A."/>
            <person name="Benson A.K."/>
            <person name="Tannock G.W."/>
            <person name="Loach D.M."/>
            <person name="Kim J."/>
            <person name="Zhang M."/>
            <person name="Oh P.L."/>
            <person name="Heng N.C."/>
            <person name="Patil P.B."/>
            <person name="Juge N."/>
            <person name="Mackenzie D.A."/>
            <person name="Pearson B.M."/>
            <person name="Lapidus A."/>
            <person name="Dalin E."/>
            <person name="Tice H."/>
            <person name="Goltsman E."/>
            <person name="Land M."/>
            <person name="Hauser L."/>
            <person name="Ivanova N."/>
            <person name="Kyrpides N.C."/>
            <person name="Walter J."/>
        </authorList>
    </citation>
    <scope>NUCLEOTIDE SEQUENCE [LARGE SCALE GENOMIC DNA]</scope>
    <source>
        <strain>DSM 20016</strain>
    </source>
</reference>
<gene>
    <name evidence="1" type="primary">hemA</name>
    <name type="ordered locus">Lreu_1703</name>
</gene>
<sequence length="421" mass="47865">MYLMCVSLNYHQLPLDLREKFSFTKEEVPKADKLLNDEKSILENLLISTCNRTEVYAVVDQIHTGRYYIRRFLAEWFHYTIDDFTKFVTVTTKDAVAEHLFKVITGLDSLIKGEPQILGQMKDAFQIATKEGTTGAILNHLFRQAITFSKRMHTKYRVSELAQSSGQAGLHQIKMQFGSLEGKTLAVVGLGQIGKHTAYNASNMGFSKVLLLNRTDSKAEQIATELQGVVEARPFNQLATVVHNVDAAIFAATVKQPLFKADEQISTMIVDLGVPRNVAVNSTKLKYYDVDHVHMILNSNDEKRRLMIQKIANEIPQEVNDFYIWEKQLHIVPVIRGLREHSLRIEGEAYDSLLRKLPELDSHERKVISKHMKSIVNQMIKGPIKEIKELSVTPGATADIDFFCKIFGMDNLKVENQNNDK</sequence>
<protein>
    <recommendedName>
        <fullName evidence="1">Glutamyl-tRNA reductase</fullName>
        <shortName evidence="1">GluTR</shortName>
        <ecNumber evidence="1">1.2.1.70</ecNumber>
    </recommendedName>
</protein>
<organism>
    <name type="scientific">Limosilactobacillus reuteri (strain DSM 20016)</name>
    <name type="common">Lactobacillus reuteri</name>
    <dbReference type="NCBI Taxonomy" id="557436"/>
    <lineage>
        <taxon>Bacteria</taxon>
        <taxon>Bacillati</taxon>
        <taxon>Bacillota</taxon>
        <taxon>Bacilli</taxon>
        <taxon>Lactobacillales</taxon>
        <taxon>Lactobacillaceae</taxon>
        <taxon>Limosilactobacillus</taxon>
    </lineage>
</organism>
<accession>A5VM68</accession>
<name>HEM1_LIMRD</name>